<proteinExistence type="inferred from homology"/>
<keyword id="KW-0012">Acyltransferase</keyword>
<keyword id="KW-0963">Cytoplasm</keyword>
<keyword id="KW-0275">Fatty acid biosynthesis</keyword>
<keyword id="KW-0276">Fatty acid metabolism</keyword>
<keyword id="KW-0444">Lipid biosynthesis</keyword>
<keyword id="KW-0443">Lipid metabolism</keyword>
<keyword id="KW-0511">Multifunctional enzyme</keyword>
<keyword id="KW-0808">Transferase</keyword>
<feature type="chain" id="PRO_1000187882" description="Beta-ketoacyl-[acyl-carrier-protein] synthase III">
    <location>
        <begin position="1"/>
        <end position="320"/>
    </location>
</feature>
<feature type="region of interest" description="ACP-binding" evidence="1">
    <location>
        <begin position="248"/>
        <end position="252"/>
    </location>
</feature>
<feature type="active site" evidence="1">
    <location>
        <position position="114"/>
    </location>
</feature>
<feature type="active site" evidence="1">
    <location>
        <position position="247"/>
    </location>
</feature>
<feature type="active site" evidence="1">
    <location>
        <position position="277"/>
    </location>
</feature>
<dbReference type="EC" id="2.3.1.180" evidence="1"/>
<dbReference type="EMBL" id="CP001050">
    <property type="protein sequence ID" value="ACF31246.1"/>
    <property type="molecule type" value="Genomic_DNA"/>
</dbReference>
<dbReference type="RefSeq" id="WP_003687179.1">
    <property type="nucleotide sequence ID" value="NC_011035.1"/>
</dbReference>
<dbReference type="SMR" id="B4RJI1"/>
<dbReference type="KEGG" id="ngk:NGK_2647"/>
<dbReference type="HOGENOM" id="CLU_039592_4_1_4"/>
<dbReference type="UniPathway" id="UPA00094"/>
<dbReference type="Proteomes" id="UP000002564">
    <property type="component" value="Chromosome"/>
</dbReference>
<dbReference type="GO" id="GO:0005737">
    <property type="term" value="C:cytoplasm"/>
    <property type="evidence" value="ECO:0007669"/>
    <property type="project" value="UniProtKB-SubCell"/>
</dbReference>
<dbReference type="GO" id="GO:0004315">
    <property type="term" value="F:3-oxoacyl-[acyl-carrier-protein] synthase activity"/>
    <property type="evidence" value="ECO:0007669"/>
    <property type="project" value="InterPro"/>
</dbReference>
<dbReference type="GO" id="GO:0033818">
    <property type="term" value="F:beta-ketoacyl-acyl-carrier-protein synthase III activity"/>
    <property type="evidence" value="ECO:0007669"/>
    <property type="project" value="UniProtKB-UniRule"/>
</dbReference>
<dbReference type="GO" id="GO:0006633">
    <property type="term" value="P:fatty acid biosynthetic process"/>
    <property type="evidence" value="ECO:0007669"/>
    <property type="project" value="UniProtKB-UniRule"/>
</dbReference>
<dbReference type="CDD" id="cd00830">
    <property type="entry name" value="KAS_III"/>
    <property type="match status" value="1"/>
</dbReference>
<dbReference type="FunFam" id="3.40.47.10:FF:000004">
    <property type="entry name" value="3-oxoacyl-[acyl-carrier-protein] synthase 3"/>
    <property type="match status" value="1"/>
</dbReference>
<dbReference type="Gene3D" id="3.40.47.10">
    <property type="match status" value="1"/>
</dbReference>
<dbReference type="HAMAP" id="MF_01815">
    <property type="entry name" value="FabH"/>
    <property type="match status" value="1"/>
</dbReference>
<dbReference type="InterPro" id="IPR013747">
    <property type="entry name" value="ACP_syn_III_C"/>
</dbReference>
<dbReference type="InterPro" id="IPR013751">
    <property type="entry name" value="ACP_syn_III_N"/>
</dbReference>
<dbReference type="InterPro" id="IPR004655">
    <property type="entry name" value="FabH"/>
</dbReference>
<dbReference type="InterPro" id="IPR016039">
    <property type="entry name" value="Thiolase-like"/>
</dbReference>
<dbReference type="NCBIfam" id="TIGR00747">
    <property type="entry name" value="fabH"/>
    <property type="match status" value="1"/>
</dbReference>
<dbReference type="NCBIfam" id="NF006829">
    <property type="entry name" value="PRK09352.1"/>
    <property type="match status" value="1"/>
</dbReference>
<dbReference type="PANTHER" id="PTHR43091">
    <property type="entry name" value="3-OXOACYL-[ACYL-CARRIER-PROTEIN] SYNTHASE"/>
    <property type="match status" value="1"/>
</dbReference>
<dbReference type="PANTHER" id="PTHR43091:SF1">
    <property type="entry name" value="BETA-KETOACYL-[ACYL-CARRIER-PROTEIN] SYNTHASE III, CHLOROPLASTIC"/>
    <property type="match status" value="1"/>
</dbReference>
<dbReference type="Pfam" id="PF08545">
    <property type="entry name" value="ACP_syn_III"/>
    <property type="match status" value="1"/>
</dbReference>
<dbReference type="Pfam" id="PF08541">
    <property type="entry name" value="ACP_syn_III_C"/>
    <property type="match status" value="1"/>
</dbReference>
<dbReference type="SUPFAM" id="SSF53901">
    <property type="entry name" value="Thiolase-like"/>
    <property type="match status" value="1"/>
</dbReference>
<protein>
    <recommendedName>
        <fullName evidence="1">Beta-ketoacyl-[acyl-carrier-protein] synthase III</fullName>
        <shortName evidence="1">Beta-ketoacyl-ACP synthase III</shortName>
        <shortName evidence="1">KAS III</shortName>
        <ecNumber evidence="1">2.3.1.180</ecNumber>
    </recommendedName>
    <alternativeName>
        <fullName evidence="1">3-oxoacyl-[acyl-carrier-protein] synthase 3</fullName>
    </alternativeName>
    <alternativeName>
        <fullName evidence="1">3-oxoacyl-[acyl-carrier-protein] synthase III</fullName>
    </alternativeName>
</protein>
<accession>B4RJI1</accession>
<reference key="1">
    <citation type="journal article" date="2008" name="J. Bacteriol.">
        <title>Complete genome sequence of Neisseria gonorrhoeae NCCP11945.</title>
        <authorList>
            <person name="Chung G.T."/>
            <person name="Yoo J.S."/>
            <person name="Oh H.B."/>
            <person name="Lee Y.S."/>
            <person name="Cha S.H."/>
            <person name="Kim S.J."/>
            <person name="Yoo C.K."/>
        </authorList>
    </citation>
    <scope>NUCLEOTIDE SEQUENCE [LARGE SCALE GENOMIC DNA]</scope>
    <source>
        <strain>NCCP11945</strain>
    </source>
</reference>
<gene>
    <name evidence="1" type="primary">fabH</name>
    <name type="ordered locus">NGK_2647</name>
</gene>
<comment type="function">
    <text evidence="1">Catalyzes the condensation reaction of fatty acid synthesis by the addition to an acyl acceptor of two carbons from malonyl-ACP. Catalyzes the first condensation reaction which initiates fatty acid synthesis and may therefore play a role in governing the total rate of fatty acid production. Possesses both acetoacetyl-ACP synthase and acetyl transacylase activities. Its substrate specificity determines the biosynthesis of branched-chain and/or straight-chain of fatty acids.</text>
</comment>
<comment type="catalytic activity">
    <reaction evidence="1">
        <text>malonyl-[ACP] + acetyl-CoA + H(+) = 3-oxobutanoyl-[ACP] + CO2 + CoA</text>
        <dbReference type="Rhea" id="RHEA:12080"/>
        <dbReference type="Rhea" id="RHEA-COMP:9623"/>
        <dbReference type="Rhea" id="RHEA-COMP:9625"/>
        <dbReference type="ChEBI" id="CHEBI:15378"/>
        <dbReference type="ChEBI" id="CHEBI:16526"/>
        <dbReference type="ChEBI" id="CHEBI:57287"/>
        <dbReference type="ChEBI" id="CHEBI:57288"/>
        <dbReference type="ChEBI" id="CHEBI:78449"/>
        <dbReference type="ChEBI" id="CHEBI:78450"/>
        <dbReference type="EC" id="2.3.1.180"/>
    </reaction>
</comment>
<comment type="pathway">
    <text evidence="1">Lipid metabolism; fatty acid biosynthesis.</text>
</comment>
<comment type="subunit">
    <text evidence="1">Homodimer.</text>
</comment>
<comment type="subcellular location">
    <subcellularLocation>
        <location evidence="1">Cytoplasm</location>
    </subcellularLocation>
</comment>
<comment type="domain">
    <text evidence="1">The last Arg residue of the ACP-binding site is essential for the weak association between ACP/AcpP and FabH.</text>
</comment>
<comment type="similarity">
    <text evidence="1">Belongs to the thiolase-like superfamily. FabH family.</text>
</comment>
<evidence type="ECO:0000255" key="1">
    <source>
        <dbReference type="HAMAP-Rule" id="MF_01815"/>
    </source>
</evidence>
<sequence length="320" mass="34002">MQYAKISGTGSYLPANRVSNDDLAQKVDTSDEWITARTGIKFRHIAAENEKTSDLAAEAARRALADAKLNINDIDLIIVATATPDMQFPSTATIVQQKLGITNGCPAFDVQAVCAGFMYALTTANAYIKSGMAKNALVIGAETFSRIVDWNDRTTCVLFGDGAGAVVLSASDKPGIIHSKLKADGNYLKLLNVPGQIACGKVSGSPYISMDGPGVFKFAVKMLSKIADDVIEEAGYTAEQIDWIVPHQANRRIIESTAKHLGLSMDKVVLTVQDHGNTSAASIPLALDAGIRSGQIKRGQNLLLEGIGGGFAWGAVLLQY</sequence>
<organism>
    <name type="scientific">Neisseria gonorrhoeae (strain NCCP11945)</name>
    <dbReference type="NCBI Taxonomy" id="521006"/>
    <lineage>
        <taxon>Bacteria</taxon>
        <taxon>Pseudomonadati</taxon>
        <taxon>Pseudomonadota</taxon>
        <taxon>Betaproteobacteria</taxon>
        <taxon>Neisseriales</taxon>
        <taxon>Neisseriaceae</taxon>
        <taxon>Neisseria</taxon>
    </lineage>
</organism>
<name>FABH_NEIG2</name>